<organism>
    <name type="scientific">Francisella tularensis subsp. tularensis (strain SCHU S4 / Schu 4)</name>
    <dbReference type="NCBI Taxonomy" id="177416"/>
    <lineage>
        <taxon>Bacteria</taxon>
        <taxon>Pseudomonadati</taxon>
        <taxon>Pseudomonadota</taxon>
        <taxon>Gammaproteobacteria</taxon>
        <taxon>Thiotrichales</taxon>
        <taxon>Francisellaceae</taxon>
        <taxon>Francisella</taxon>
    </lineage>
</organism>
<feature type="chain" id="PRO_0000082966" description="Methionyl-tRNA formyltransferase">
    <location>
        <begin position="1"/>
        <end position="313"/>
    </location>
</feature>
<feature type="binding site" evidence="1">
    <location>
        <begin position="113"/>
        <end position="116"/>
    </location>
    <ligand>
        <name>(6S)-5,6,7,8-tetrahydrofolate</name>
        <dbReference type="ChEBI" id="CHEBI:57453"/>
    </ligand>
</feature>
<name>FMT_FRATT</name>
<sequence>MKKLNIIFAGTPDISAQVLKDLYKSQHNIQAVLTQPDRAKGRGKKVQFSPVKEVALANHTPVFQPLSFKKNPEVLEQIKQLKPDVIVVIAYGIIVPQEFLDIPRYGCLNIHVSLLPKWRGAAPIQRAIQAGDTKTGVCIMQMDAGLDTGDILNTLEIEIQETDTSQTLHDKFAKLSIKPLLETLEKIEIIKPEPQQGEPTYAHKITKQEGLIDFTKSAWQISCHIRAFTPWPGAYFILDDEAIKVGEFEILYQNTDNRKAGTIIDIYRSGFDIATSDKIIRFRQLQFPNKKMLNIVDILNGKDLDKYIGYKLG</sequence>
<protein>
    <recommendedName>
        <fullName evidence="1">Methionyl-tRNA formyltransferase</fullName>
        <ecNumber evidence="1">2.1.2.9</ecNumber>
    </recommendedName>
</protein>
<comment type="function">
    <text evidence="1">Attaches a formyl group to the free amino group of methionyl-tRNA(fMet). The formyl group appears to play a dual role in the initiator identity of N-formylmethionyl-tRNA by promoting its recognition by IF2 and preventing the misappropriation of this tRNA by the elongation apparatus.</text>
</comment>
<comment type="catalytic activity">
    <reaction evidence="1">
        <text>L-methionyl-tRNA(fMet) + (6R)-10-formyltetrahydrofolate = N-formyl-L-methionyl-tRNA(fMet) + (6S)-5,6,7,8-tetrahydrofolate + H(+)</text>
        <dbReference type="Rhea" id="RHEA:24380"/>
        <dbReference type="Rhea" id="RHEA-COMP:9952"/>
        <dbReference type="Rhea" id="RHEA-COMP:9953"/>
        <dbReference type="ChEBI" id="CHEBI:15378"/>
        <dbReference type="ChEBI" id="CHEBI:57453"/>
        <dbReference type="ChEBI" id="CHEBI:78530"/>
        <dbReference type="ChEBI" id="CHEBI:78844"/>
        <dbReference type="ChEBI" id="CHEBI:195366"/>
        <dbReference type="EC" id="2.1.2.9"/>
    </reaction>
</comment>
<comment type="similarity">
    <text evidence="1">Belongs to the Fmt family.</text>
</comment>
<dbReference type="EC" id="2.1.2.9" evidence="1"/>
<dbReference type="EMBL" id="AJ749949">
    <property type="protein sequence ID" value="CAG45558.1"/>
    <property type="molecule type" value="Genomic_DNA"/>
</dbReference>
<dbReference type="RefSeq" id="WP_003019095.1">
    <property type="nucleotide sequence ID" value="NZ_CP010290.1"/>
</dbReference>
<dbReference type="RefSeq" id="YP_169921.1">
    <property type="nucleotide sequence ID" value="NC_006570.2"/>
</dbReference>
<dbReference type="SMR" id="Q5NGC1"/>
<dbReference type="STRING" id="177416.FTT_0925"/>
<dbReference type="DNASU" id="3191926"/>
<dbReference type="EnsemblBacteria" id="CAG45558">
    <property type="protein sequence ID" value="CAG45558"/>
    <property type="gene ID" value="FTT_0925"/>
</dbReference>
<dbReference type="KEGG" id="ftu:FTT_0925"/>
<dbReference type="eggNOG" id="COG0223">
    <property type="taxonomic scope" value="Bacteria"/>
</dbReference>
<dbReference type="OrthoDB" id="9802815at2"/>
<dbReference type="Proteomes" id="UP000001174">
    <property type="component" value="Chromosome"/>
</dbReference>
<dbReference type="GO" id="GO:0005829">
    <property type="term" value="C:cytosol"/>
    <property type="evidence" value="ECO:0007669"/>
    <property type="project" value="TreeGrafter"/>
</dbReference>
<dbReference type="GO" id="GO:0004479">
    <property type="term" value="F:methionyl-tRNA formyltransferase activity"/>
    <property type="evidence" value="ECO:0007669"/>
    <property type="project" value="UniProtKB-UniRule"/>
</dbReference>
<dbReference type="CDD" id="cd08646">
    <property type="entry name" value="FMT_core_Met-tRNA-FMT_N"/>
    <property type="match status" value="1"/>
</dbReference>
<dbReference type="CDD" id="cd08704">
    <property type="entry name" value="Met_tRNA_FMT_C"/>
    <property type="match status" value="1"/>
</dbReference>
<dbReference type="Gene3D" id="3.40.50.12230">
    <property type="match status" value="1"/>
</dbReference>
<dbReference type="HAMAP" id="MF_00182">
    <property type="entry name" value="Formyl_trans"/>
    <property type="match status" value="1"/>
</dbReference>
<dbReference type="InterPro" id="IPR005794">
    <property type="entry name" value="Fmt"/>
</dbReference>
<dbReference type="InterPro" id="IPR005793">
    <property type="entry name" value="Formyl_trans_C"/>
</dbReference>
<dbReference type="InterPro" id="IPR002376">
    <property type="entry name" value="Formyl_transf_N"/>
</dbReference>
<dbReference type="InterPro" id="IPR036477">
    <property type="entry name" value="Formyl_transf_N_sf"/>
</dbReference>
<dbReference type="InterPro" id="IPR011034">
    <property type="entry name" value="Formyl_transferase-like_C_sf"/>
</dbReference>
<dbReference type="InterPro" id="IPR001555">
    <property type="entry name" value="GART_AS"/>
</dbReference>
<dbReference type="InterPro" id="IPR044135">
    <property type="entry name" value="Met-tRNA-FMT_C"/>
</dbReference>
<dbReference type="InterPro" id="IPR041711">
    <property type="entry name" value="Met-tRNA-FMT_N"/>
</dbReference>
<dbReference type="NCBIfam" id="TIGR00460">
    <property type="entry name" value="fmt"/>
    <property type="match status" value="1"/>
</dbReference>
<dbReference type="PANTHER" id="PTHR11138">
    <property type="entry name" value="METHIONYL-TRNA FORMYLTRANSFERASE"/>
    <property type="match status" value="1"/>
</dbReference>
<dbReference type="PANTHER" id="PTHR11138:SF5">
    <property type="entry name" value="METHIONYL-TRNA FORMYLTRANSFERASE, MITOCHONDRIAL"/>
    <property type="match status" value="1"/>
</dbReference>
<dbReference type="Pfam" id="PF02911">
    <property type="entry name" value="Formyl_trans_C"/>
    <property type="match status" value="1"/>
</dbReference>
<dbReference type="Pfam" id="PF00551">
    <property type="entry name" value="Formyl_trans_N"/>
    <property type="match status" value="1"/>
</dbReference>
<dbReference type="SUPFAM" id="SSF50486">
    <property type="entry name" value="FMT C-terminal domain-like"/>
    <property type="match status" value="1"/>
</dbReference>
<dbReference type="SUPFAM" id="SSF53328">
    <property type="entry name" value="Formyltransferase"/>
    <property type="match status" value="1"/>
</dbReference>
<dbReference type="PROSITE" id="PS00373">
    <property type="entry name" value="GART"/>
    <property type="match status" value="1"/>
</dbReference>
<reference key="1">
    <citation type="journal article" date="2005" name="Nat. Genet.">
        <title>The complete genome sequence of Francisella tularensis, the causative agent of tularemia.</title>
        <authorList>
            <person name="Larsson P."/>
            <person name="Oyston P.C.F."/>
            <person name="Chain P."/>
            <person name="Chu M.C."/>
            <person name="Duffield M."/>
            <person name="Fuxelius H.-H."/>
            <person name="Garcia E."/>
            <person name="Haelltorp G."/>
            <person name="Johansson D."/>
            <person name="Isherwood K.E."/>
            <person name="Karp P.D."/>
            <person name="Larsson E."/>
            <person name="Liu Y."/>
            <person name="Michell S."/>
            <person name="Prior J."/>
            <person name="Prior R."/>
            <person name="Malfatti S."/>
            <person name="Sjoestedt A."/>
            <person name="Svensson K."/>
            <person name="Thompson N."/>
            <person name="Vergez L."/>
            <person name="Wagg J.K."/>
            <person name="Wren B.W."/>
            <person name="Lindler L.E."/>
            <person name="Andersson S.G.E."/>
            <person name="Forsman M."/>
            <person name="Titball R.W."/>
        </authorList>
    </citation>
    <scope>NUCLEOTIDE SEQUENCE [LARGE SCALE GENOMIC DNA]</scope>
    <source>
        <strain>SCHU S4 / Schu 4</strain>
    </source>
</reference>
<evidence type="ECO:0000255" key="1">
    <source>
        <dbReference type="HAMAP-Rule" id="MF_00182"/>
    </source>
</evidence>
<keyword id="KW-0648">Protein biosynthesis</keyword>
<keyword id="KW-1185">Reference proteome</keyword>
<keyword id="KW-0808">Transferase</keyword>
<proteinExistence type="inferred from homology"/>
<accession>Q5NGC1</accession>
<gene>
    <name evidence="1" type="primary">fmt</name>
    <name type="ordered locus">FTT_0925</name>
</gene>